<comment type="function">
    <text evidence="1">Binds to DNA and alters its conformation. May be involved in regulation of gene expression, nucleoid organization and DNA protection.</text>
</comment>
<comment type="subunit">
    <text evidence="1">Homodimer.</text>
</comment>
<comment type="subcellular location">
    <subcellularLocation>
        <location evidence="1">Cytoplasm</location>
        <location evidence="1">Nucleoid</location>
    </subcellularLocation>
</comment>
<comment type="similarity">
    <text evidence="1">Belongs to the YbaB/EbfC family.</text>
</comment>
<protein>
    <recommendedName>
        <fullName evidence="1">Nucleoid-associated protein Mvan_5528</fullName>
    </recommendedName>
</protein>
<proteinExistence type="inferred from homology"/>
<gene>
    <name type="ordered locus">Mvan_5528</name>
</gene>
<dbReference type="EMBL" id="CP000511">
    <property type="protein sequence ID" value="ABM16294.1"/>
    <property type="molecule type" value="Genomic_DNA"/>
</dbReference>
<dbReference type="RefSeq" id="WP_011782647.1">
    <property type="nucleotide sequence ID" value="NZ_JACKSD010000145.1"/>
</dbReference>
<dbReference type="SMR" id="A1TGJ4"/>
<dbReference type="STRING" id="350058.Mvan_5528"/>
<dbReference type="KEGG" id="mva:Mvan_5528"/>
<dbReference type="eggNOG" id="COG0718">
    <property type="taxonomic scope" value="Bacteria"/>
</dbReference>
<dbReference type="HOGENOM" id="CLU_140930_4_0_11"/>
<dbReference type="Proteomes" id="UP000009159">
    <property type="component" value="Chromosome"/>
</dbReference>
<dbReference type="GO" id="GO:0043590">
    <property type="term" value="C:bacterial nucleoid"/>
    <property type="evidence" value="ECO:0007669"/>
    <property type="project" value="UniProtKB-UniRule"/>
</dbReference>
<dbReference type="GO" id="GO:0005829">
    <property type="term" value="C:cytosol"/>
    <property type="evidence" value="ECO:0007669"/>
    <property type="project" value="TreeGrafter"/>
</dbReference>
<dbReference type="GO" id="GO:0003677">
    <property type="term" value="F:DNA binding"/>
    <property type="evidence" value="ECO:0007669"/>
    <property type="project" value="UniProtKB-UniRule"/>
</dbReference>
<dbReference type="Gene3D" id="3.30.1310.10">
    <property type="entry name" value="Nucleoid-associated protein YbaB-like domain"/>
    <property type="match status" value="1"/>
</dbReference>
<dbReference type="HAMAP" id="MF_00274">
    <property type="entry name" value="DNA_YbaB_EbfC"/>
    <property type="match status" value="1"/>
</dbReference>
<dbReference type="InterPro" id="IPR036894">
    <property type="entry name" value="YbaB-like_sf"/>
</dbReference>
<dbReference type="InterPro" id="IPR004401">
    <property type="entry name" value="YbaB/EbfC"/>
</dbReference>
<dbReference type="NCBIfam" id="TIGR00103">
    <property type="entry name" value="DNA_YbaB_EbfC"/>
    <property type="match status" value="1"/>
</dbReference>
<dbReference type="PANTHER" id="PTHR33449">
    <property type="entry name" value="NUCLEOID-ASSOCIATED PROTEIN YBAB"/>
    <property type="match status" value="1"/>
</dbReference>
<dbReference type="PANTHER" id="PTHR33449:SF1">
    <property type="entry name" value="NUCLEOID-ASSOCIATED PROTEIN YBAB"/>
    <property type="match status" value="1"/>
</dbReference>
<dbReference type="Pfam" id="PF02575">
    <property type="entry name" value="YbaB_DNA_bd"/>
    <property type="match status" value="1"/>
</dbReference>
<dbReference type="PIRSF" id="PIRSF004555">
    <property type="entry name" value="UCP004555"/>
    <property type="match status" value="1"/>
</dbReference>
<dbReference type="SUPFAM" id="SSF82607">
    <property type="entry name" value="YbaB-like"/>
    <property type="match status" value="1"/>
</dbReference>
<evidence type="ECO:0000255" key="1">
    <source>
        <dbReference type="HAMAP-Rule" id="MF_00274"/>
    </source>
</evidence>
<reference key="1">
    <citation type="submission" date="2006-12" db="EMBL/GenBank/DDBJ databases">
        <title>Complete sequence of Mycobacterium vanbaalenii PYR-1.</title>
        <authorList>
            <consortium name="US DOE Joint Genome Institute"/>
            <person name="Copeland A."/>
            <person name="Lucas S."/>
            <person name="Lapidus A."/>
            <person name="Barry K."/>
            <person name="Detter J.C."/>
            <person name="Glavina del Rio T."/>
            <person name="Hammon N."/>
            <person name="Israni S."/>
            <person name="Dalin E."/>
            <person name="Tice H."/>
            <person name="Pitluck S."/>
            <person name="Singan V."/>
            <person name="Schmutz J."/>
            <person name="Larimer F."/>
            <person name="Land M."/>
            <person name="Hauser L."/>
            <person name="Kyrpides N."/>
            <person name="Anderson I.J."/>
            <person name="Miller C."/>
            <person name="Richardson P."/>
        </authorList>
    </citation>
    <scope>NUCLEOTIDE SEQUENCE [LARGE SCALE GENOMIC DNA]</scope>
    <source>
        <strain>DSM 7251 / JCM 13017 / BCRC 16820 / KCTC 9966 / NRRL B-24157 / PYR-1</strain>
    </source>
</reference>
<name>Y5528_MYCVP</name>
<organism>
    <name type="scientific">Mycolicibacterium vanbaalenii (strain DSM 7251 / JCM 13017 / BCRC 16820 / KCTC 9966 / NRRL B-24157 / PYR-1)</name>
    <name type="common">Mycobacterium vanbaalenii</name>
    <dbReference type="NCBI Taxonomy" id="350058"/>
    <lineage>
        <taxon>Bacteria</taxon>
        <taxon>Bacillati</taxon>
        <taxon>Actinomycetota</taxon>
        <taxon>Actinomycetes</taxon>
        <taxon>Mycobacteriales</taxon>
        <taxon>Mycobacteriaceae</taxon>
        <taxon>Mycolicibacterium</taxon>
    </lineage>
</organism>
<sequence>MQPGGQPDMSALLAQAQQVQQQLMEAQEALANAEVNGQAGGGLVQVTMRGSGEVVAVRIDPKVVDPSDVETLQDLIVGAVADAAKQVTILAHDRLGPLAGGMGGLGLPGM</sequence>
<feature type="chain" id="PRO_1000003780" description="Nucleoid-associated protein Mvan_5528">
    <location>
        <begin position="1"/>
        <end position="110"/>
    </location>
</feature>
<keyword id="KW-0963">Cytoplasm</keyword>
<keyword id="KW-0238">DNA-binding</keyword>
<accession>A1TGJ4</accession>